<feature type="chain" id="PRO_0000050394" description="Low-affinity glucose transporter HXT4">
    <location>
        <begin position="1"/>
        <end position="576"/>
    </location>
</feature>
<feature type="topological domain" description="Cytoplasmic" evidence="1">
    <location>
        <begin position="1"/>
        <end position="66"/>
    </location>
</feature>
<feature type="transmembrane region" description="Helical; Name=1" evidence="1">
    <location>
        <begin position="67"/>
        <end position="87"/>
    </location>
</feature>
<feature type="topological domain" description="Extracellular" evidence="1">
    <location>
        <begin position="88"/>
        <end position="122"/>
    </location>
</feature>
<feature type="transmembrane region" description="Helical; Name=2" evidence="1">
    <location>
        <begin position="123"/>
        <end position="143"/>
    </location>
</feature>
<feature type="topological domain" description="Cytoplasmic" evidence="1">
    <location>
        <begin position="144"/>
        <end position="149"/>
    </location>
</feature>
<feature type="transmembrane region" description="Helical; Name=3" evidence="1">
    <location>
        <begin position="150"/>
        <end position="170"/>
    </location>
</feature>
<feature type="topological domain" description="Extracellular" evidence="1">
    <location>
        <begin position="171"/>
        <end position="180"/>
    </location>
</feature>
<feature type="transmembrane region" description="Helical; Name=4" evidence="1">
    <location>
        <begin position="181"/>
        <end position="201"/>
    </location>
</feature>
<feature type="topological domain" description="Cytoplasmic" evidence="1">
    <location>
        <begin position="202"/>
        <end position="207"/>
    </location>
</feature>
<feature type="transmembrane region" description="Helical; Name=5" evidence="1">
    <location>
        <begin position="208"/>
        <end position="228"/>
    </location>
</feature>
<feature type="topological domain" description="Extracellular" evidence="1">
    <location>
        <begin position="229"/>
        <end position="242"/>
    </location>
</feature>
<feature type="transmembrane region" description="Helical; Name=6" evidence="1">
    <location>
        <begin position="243"/>
        <end position="263"/>
    </location>
</feature>
<feature type="topological domain" description="Cytoplasmic" evidence="1">
    <location>
        <begin position="264"/>
        <end position="346"/>
    </location>
</feature>
<feature type="transmembrane region" description="Helical; Name=7" evidence="1">
    <location>
        <begin position="347"/>
        <end position="363"/>
    </location>
</feature>
<feature type="topological domain" description="Extracellular" evidence="1">
    <location>
        <begin position="364"/>
        <end position="369"/>
    </location>
</feature>
<feature type="transmembrane region" description="Helical; Name=8" evidence="1">
    <location>
        <begin position="370"/>
        <end position="387"/>
    </location>
</feature>
<feature type="topological domain" description="Cytoplasmic" evidence="1">
    <location>
        <begin position="388"/>
        <end position="394"/>
    </location>
</feature>
<feature type="transmembrane region" description="Helical; Name=9" evidence="1">
    <location>
        <begin position="395"/>
        <end position="415"/>
    </location>
</feature>
<feature type="topological domain" description="Extracellular" evidence="1">
    <location>
        <begin position="416"/>
        <end position="437"/>
    </location>
</feature>
<feature type="transmembrane region" description="Helical; Name=10" evidence="1">
    <location>
        <begin position="438"/>
        <end position="458"/>
    </location>
</feature>
<feature type="topological domain" description="Cytoplasmic" evidence="1">
    <location>
        <begin position="459"/>
        <end position="475"/>
    </location>
</feature>
<feature type="transmembrane region" description="Helical; Name=11" evidence="1">
    <location>
        <begin position="476"/>
        <end position="496"/>
    </location>
</feature>
<feature type="topological domain" description="Extracellular" evidence="1">
    <location>
        <position position="497"/>
    </location>
</feature>
<feature type="transmembrane region" description="Helical; Name=12" evidence="1">
    <location>
        <begin position="498"/>
        <end position="518"/>
    </location>
</feature>
<feature type="topological domain" description="Cytoplasmic" evidence="1">
    <location>
        <begin position="519"/>
        <end position="576"/>
    </location>
</feature>
<feature type="region of interest" description="Disordered" evidence="2">
    <location>
        <begin position="1"/>
        <end position="56"/>
    </location>
</feature>
<feature type="compositionally biased region" description="Polar residues" evidence="2">
    <location>
        <begin position="25"/>
        <end position="37"/>
    </location>
</feature>
<feature type="compositionally biased region" description="Basic and acidic residues" evidence="2">
    <location>
        <begin position="38"/>
        <end position="54"/>
    </location>
</feature>
<feature type="glycosylation site" description="N-linked (GlcNAc...) asparagine" evidence="1">
    <location>
        <position position="425"/>
    </location>
</feature>
<feature type="cross-link" description="Glycyl lysine isopeptide (Lys-Gly) (interchain with G-Cter in ubiquitin)" evidence="3">
    <location>
        <position position="45"/>
    </location>
</feature>
<accession>P32467</accession>
<accession>D3DL44</accession>
<gene>
    <name type="primary">HXT4</name>
    <name type="synonym">LGT1</name>
    <name type="synonym">RAG1</name>
    <name type="ordered locus">YHR092C</name>
</gene>
<comment type="function">
    <text evidence="4">Low-affinity glucose transporter. Can also transport xylose.</text>
</comment>
<comment type="activity regulation">
    <text>Xylose uptake is strongly inhibited by glucose.</text>
</comment>
<comment type="biophysicochemical properties">
    <kinetics>
        <KM evidence="4">170 mM for xylose uptake</KM>
        <Vmax evidence="4">190.0 nmol/min/mg enzyme for xylose uptake</Vmax>
    </kinetics>
</comment>
<comment type="subcellular location">
    <subcellularLocation>
        <location evidence="5">Cell membrane</location>
        <topology>Multi-pass membrane protein</topology>
    </subcellularLocation>
</comment>
<comment type="miscellaneous">
    <text>Glucose transport is thought to be mediated by two kinetically distinct systems, a glucose-repressible high-affinity system and a constitutive low-affinity system.</text>
</comment>
<comment type="similarity">
    <text evidence="5">Belongs to the major facilitator superfamily. Sugar transporter (TC 2.A.1.1) family.</text>
</comment>
<comment type="sequence caution" evidence="5">
    <conflict type="frameshift">
        <sequence resource="EMBL-CDS" id="AAB68932"/>
    </conflict>
</comment>
<dbReference type="EMBL" id="M81960">
    <property type="protein sequence ID" value="AAA20997.1"/>
    <property type="molecule type" value="Genomic_DNA"/>
</dbReference>
<dbReference type="EMBL" id="X67321">
    <property type="protein sequence ID" value="CAA47735.1"/>
    <property type="molecule type" value="Genomic_DNA"/>
</dbReference>
<dbReference type="EMBL" id="U00060">
    <property type="protein sequence ID" value="AAB68932.1"/>
    <property type="status" value="ALT_FRAME"/>
    <property type="molecule type" value="Genomic_DNA"/>
</dbReference>
<dbReference type="EMBL" id="BK006934">
    <property type="protein sequence ID" value="DAA06788.2"/>
    <property type="molecule type" value="Genomic_DNA"/>
</dbReference>
<dbReference type="PIR" id="S46724">
    <property type="entry name" value="S46724"/>
</dbReference>
<dbReference type="RefSeq" id="NP_011960.2">
    <property type="nucleotide sequence ID" value="NM_001179222.2"/>
</dbReference>
<dbReference type="SMR" id="P32467"/>
<dbReference type="BioGRID" id="36527">
    <property type="interactions" value="71"/>
</dbReference>
<dbReference type="DIP" id="DIP-7908N"/>
<dbReference type="FunCoup" id="P32467">
    <property type="interactions" value="1525"/>
</dbReference>
<dbReference type="IntAct" id="P32467">
    <property type="interactions" value="11"/>
</dbReference>
<dbReference type="STRING" id="4932.YHR092C"/>
<dbReference type="TCDB" id="2.A.1.1.30">
    <property type="family name" value="the major facilitator superfamily (mfs)"/>
</dbReference>
<dbReference type="GlyCosmos" id="P32467">
    <property type="glycosylation" value="1 site, No reported glycans"/>
</dbReference>
<dbReference type="GlyGen" id="P32467">
    <property type="glycosylation" value="2 sites"/>
</dbReference>
<dbReference type="iPTMnet" id="P32467"/>
<dbReference type="PaxDb" id="4932-YHR092C"/>
<dbReference type="PeptideAtlas" id="P32467"/>
<dbReference type="EnsemblFungi" id="YHR092C_mRNA">
    <property type="protein sequence ID" value="YHR092C"/>
    <property type="gene ID" value="YHR092C"/>
</dbReference>
<dbReference type="GeneID" id="856492"/>
<dbReference type="KEGG" id="sce:YHR092C"/>
<dbReference type="AGR" id="SGD:S000001134"/>
<dbReference type="SGD" id="S000001134">
    <property type="gene designation" value="HXT4"/>
</dbReference>
<dbReference type="VEuPathDB" id="FungiDB:YHR092C"/>
<dbReference type="eggNOG" id="KOG0254">
    <property type="taxonomic scope" value="Eukaryota"/>
</dbReference>
<dbReference type="GeneTree" id="ENSGT00940000176280"/>
<dbReference type="HOGENOM" id="CLU_001265_30_1_1"/>
<dbReference type="InParanoid" id="P32467"/>
<dbReference type="OMA" id="MQKEYNA"/>
<dbReference type="OrthoDB" id="5141738at2759"/>
<dbReference type="BioCyc" id="YEAST:G3O-31139-MONOMER"/>
<dbReference type="BioGRID-ORCS" id="856492">
    <property type="hits" value="0 hits in 10 CRISPR screens"/>
</dbReference>
<dbReference type="PRO" id="PR:P32467"/>
<dbReference type="Proteomes" id="UP000002311">
    <property type="component" value="Chromosome VIII"/>
</dbReference>
<dbReference type="RNAct" id="P32467">
    <property type="molecule type" value="protein"/>
</dbReference>
<dbReference type="GO" id="GO:0071944">
    <property type="term" value="C:cell periphery"/>
    <property type="evidence" value="ECO:0007005"/>
    <property type="project" value="SGD"/>
</dbReference>
<dbReference type="GO" id="GO:0005886">
    <property type="term" value="C:plasma membrane"/>
    <property type="evidence" value="ECO:0000314"/>
    <property type="project" value="SGD"/>
</dbReference>
<dbReference type="GO" id="GO:0005351">
    <property type="term" value="F:carbohydrate:proton symporter activity"/>
    <property type="evidence" value="ECO:0000318"/>
    <property type="project" value="GO_Central"/>
</dbReference>
<dbReference type="GO" id="GO:0055056">
    <property type="term" value="F:D-glucose transmembrane transporter activity"/>
    <property type="evidence" value="ECO:0000314"/>
    <property type="project" value="SGD"/>
</dbReference>
<dbReference type="GO" id="GO:0005353">
    <property type="term" value="F:fructose transmembrane transporter activity"/>
    <property type="evidence" value="ECO:0000304"/>
    <property type="project" value="SGD"/>
</dbReference>
<dbReference type="GO" id="GO:0015578">
    <property type="term" value="F:mannose transmembrane transporter activity"/>
    <property type="evidence" value="ECO:0000304"/>
    <property type="project" value="SGD"/>
</dbReference>
<dbReference type="GO" id="GO:0015146">
    <property type="term" value="F:pentose transmembrane transporter activity"/>
    <property type="evidence" value="ECO:0000315"/>
    <property type="project" value="SGD"/>
</dbReference>
<dbReference type="GO" id="GO:0008643">
    <property type="term" value="P:carbohydrate transport"/>
    <property type="evidence" value="ECO:0000318"/>
    <property type="project" value="GO_Central"/>
</dbReference>
<dbReference type="GO" id="GO:0008645">
    <property type="term" value="P:hexose transmembrane transport"/>
    <property type="evidence" value="ECO:0000304"/>
    <property type="project" value="SGD"/>
</dbReference>
<dbReference type="CDD" id="cd17356">
    <property type="entry name" value="MFS_HXT"/>
    <property type="match status" value="1"/>
</dbReference>
<dbReference type="FunFam" id="1.20.1250.20:FF:000044">
    <property type="entry name" value="Hexose transporter Hxt3p"/>
    <property type="match status" value="1"/>
</dbReference>
<dbReference type="Gene3D" id="1.20.1250.20">
    <property type="entry name" value="MFS general substrate transporter like domains"/>
    <property type="match status" value="1"/>
</dbReference>
<dbReference type="InterPro" id="IPR020846">
    <property type="entry name" value="MFS_dom"/>
</dbReference>
<dbReference type="InterPro" id="IPR005828">
    <property type="entry name" value="MFS_sugar_transport-like"/>
</dbReference>
<dbReference type="InterPro" id="IPR050360">
    <property type="entry name" value="MFS_Sugar_Transporters"/>
</dbReference>
<dbReference type="InterPro" id="IPR036259">
    <property type="entry name" value="MFS_trans_sf"/>
</dbReference>
<dbReference type="InterPro" id="IPR003663">
    <property type="entry name" value="Sugar/inositol_transpt"/>
</dbReference>
<dbReference type="InterPro" id="IPR005829">
    <property type="entry name" value="Sugar_transporter_CS"/>
</dbReference>
<dbReference type="NCBIfam" id="TIGR00879">
    <property type="entry name" value="SP"/>
    <property type="match status" value="1"/>
</dbReference>
<dbReference type="PANTHER" id="PTHR48022:SF75">
    <property type="entry name" value="GALACTOSE TRANSPORTER-RELATED"/>
    <property type="match status" value="1"/>
</dbReference>
<dbReference type="PANTHER" id="PTHR48022">
    <property type="entry name" value="PLASTIDIC GLUCOSE TRANSPORTER 4"/>
    <property type="match status" value="1"/>
</dbReference>
<dbReference type="Pfam" id="PF00083">
    <property type="entry name" value="Sugar_tr"/>
    <property type="match status" value="1"/>
</dbReference>
<dbReference type="PRINTS" id="PR00171">
    <property type="entry name" value="SUGRTRNSPORT"/>
</dbReference>
<dbReference type="SUPFAM" id="SSF103473">
    <property type="entry name" value="MFS general substrate transporter"/>
    <property type="match status" value="1"/>
</dbReference>
<dbReference type="PROSITE" id="PS50850">
    <property type="entry name" value="MFS"/>
    <property type="match status" value="1"/>
</dbReference>
<dbReference type="PROSITE" id="PS00216">
    <property type="entry name" value="SUGAR_TRANSPORT_1"/>
    <property type="match status" value="1"/>
</dbReference>
<dbReference type="PROSITE" id="PS00217">
    <property type="entry name" value="SUGAR_TRANSPORT_2"/>
    <property type="match status" value="1"/>
</dbReference>
<sequence>MSEEAAYQEDTAVQNTPADALSPVESDSNSALSTPSNKAERDDMKDFDENHEESNNYVEIPKKPASAYVTVSICCLMVAFGGFVFGWDTGTISGFVAQTDFIRRFGMKHHDGTYYLSKVRTGLIVSIFNIGCAIGGIILAKLGDMYGRKMGLIVVVVIYIIGIIIQIASINKWYQYFIGRIISGLGVGGIAVLSPMLISEVSPKHIRGTLVSCYQLMITLGIFLGYCTNYGTKTYTNSVQWRVPLGLGFAWALFMIGGMTFVPESPRYLVEVGKIEEAKRSIALSNKVSADDPAVMAEVEVVQATVEAEKLAGNASWGEIFSTKTKVFQRLIMGAMIQSLQQLTGDNYFFYYGTTVFTAVGLEDSFETSIVLGIVNFASTFVGIFLVERYGRRRCLLWGAASMTACMVVFASVGVTRLWPNGKKNGSSKGAGNCMIVFTCFYLFCFATTWAPIPFVVNSETFPLRVKSKCMAIAQACNWIWGFLIGFFTPFISGAIDFYYGYVFMGCLVFSYFYVFFFVPETKGLTLEEVNTLWEEGVLPWKSPSWVPPNKRGTDYNADDLMHDDQPFYKKMFGKK</sequence>
<organism>
    <name type="scientific">Saccharomyces cerevisiae (strain ATCC 204508 / S288c)</name>
    <name type="common">Baker's yeast</name>
    <dbReference type="NCBI Taxonomy" id="559292"/>
    <lineage>
        <taxon>Eukaryota</taxon>
        <taxon>Fungi</taxon>
        <taxon>Dikarya</taxon>
        <taxon>Ascomycota</taxon>
        <taxon>Saccharomycotina</taxon>
        <taxon>Saccharomycetes</taxon>
        <taxon>Saccharomycetales</taxon>
        <taxon>Saccharomycetaceae</taxon>
        <taxon>Saccharomyces</taxon>
    </lineage>
</organism>
<reference key="1">
    <citation type="journal article" date="1994" name="Genetics">
        <title>High-copy suppression of glucose transport defects by HXT4 and regulatory elements in the promoters of the HXT genes in Saccharomyces cerevisiae.</title>
        <authorList>
            <person name="Theodoris G."/>
            <person name="Fong N.M."/>
            <person name="Coons D.M."/>
            <person name="Bisson L.F."/>
        </authorList>
    </citation>
    <scope>NUCLEOTIDE SEQUENCE [GENOMIC DNA]</scope>
</reference>
<reference key="2">
    <citation type="journal article" date="1993" name="Yeast">
        <title>Low-affinity glucose carrier gene LGT1 of Saccharomyces cerevisiae, a homologue of the Kluyveromyces lactis RAG1 gene.</title>
        <authorList>
            <person name="Prior C."/>
            <person name="Fukuhara H."/>
            <person name="Blaisonneau J."/>
            <person name="Wesolowski-Louvel M."/>
        </authorList>
    </citation>
    <scope>NUCLEOTIDE SEQUENCE [GENOMIC DNA]</scope>
</reference>
<reference key="3">
    <citation type="journal article" date="1994" name="Science">
        <title>Complete nucleotide sequence of Saccharomyces cerevisiae chromosome VIII.</title>
        <authorList>
            <person name="Johnston M."/>
            <person name="Andrews S."/>
            <person name="Brinkman R."/>
            <person name="Cooper J."/>
            <person name="Ding H."/>
            <person name="Dover J."/>
            <person name="Du Z."/>
            <person name="Favello A."/>
            <person name="Fulton L."/>
            <person name="Gattung S."/>
            <person name="Geisel C."/>
            <person name="Kirsten J."/>
            <person name="Kucaba T."/>
            <person name="Hillier L.W."/>
            <person name="Jier M."/>
            <person name="Johnston L."/>
            <person name="Langston Y."/>
            <person name="Latreille P."/>
            <person name="Louis E.J."/>
            <person name="Macri C."/>
            <person name="Mardis E."/>
            <person name="Menezes S."/>
            <person name="Mouser L."/>
            <person name="Nhan M."/>
            <person name="Rifkin L."/>
            <person name="Riles L."/>
            <person name="St Peter H."/>
            <person name="Trevaskis E."/>
            <person name="Vaughan K."/>
            <person name="Vignati D."/>
            <person name="Wilcox L."/>
            <person name="Wohldman P."/>
            <person name="Waterston R."/>
            <person name="Wilson R."/>
            <person name="Vaudin M."/>
        </authorList>
    </citation>
    <scope>NUCLEOTIDE SEQUENCE [LARGE SCALE GENOMIC DNA]</scope>
    <source>
        <strain>ATCC 204508 / S288c</strain>
    </source>
</reference>
<reference key="4">
    <citation type="journal article" date="2014" name="G3 (Bethesda)">
        <title>The reference genome sequence of Saccharomyces cerevisiae: Then and now.</title>
        <authorList>
            <person name="Engel S.R."/>
            <person name="Dietrich F.S."/>
            <person name="Fisk D.G."/>
            <person name="Binkley G."/>
            <person name="Balakrishnan R."/>
            <person name="Costanzo M.C."/>
            <person name="Dwight S.S."/>
            <person name="Hitz B.C."/>
            <person name="Karra K."/>
            <person name="Nash R.S."/>
            <person name="Weng S."/>
            <person name="Wong E.D."/>
            <person name="Lloyd P."/>
            <person name="Skrzypek M.S."/>
            <person name="Miyasato S.R."/>
            <person name="Simison M."/>
            <person name="Cherry J.M."/>
        </authorList>
    </citation>
    <scope>GENOME REANNOTATION</scope>
    <scope>SEQUENCE REVISION TO 547; 565 AND 567</scope>
    <source>
        <strain>ATCC 204508 / S288c</strain>
    </source>
</reference>
<reference key="5">
    <citation type="journal article" date="2003" name="Proc. Natl. Acad. Sci. U.S.A.">
        <title>A subset of membrane-associated proteins is ubiquitinated in response to mutations in the endoplasmic reticulum degradation machinery.</title>
        <authorList>
            <person name="Hitchcock A.L."/>
            <person name="Auld K."/>
            <person name="Gygi S.P."/>
            <person name="Silver P.A."/>
        </authorList>
    </citation>
    <scope>UBIQUITINATION [LARGE SCALE ANALYSIS] AT LYS-45</scope>
    <scope>IDENTIFICATION BY MASS SPECTROMETRY</scope>
</reference>
<reference key="6">
    <citation type="journal article" date="2007" name="Appl. Microbiol. Biotechnol.">
        <title>Xylose transport studies with xylose-utilizing Saccharomyces cerevisiae strains expressing heterologous and homologous permeases.</title>
        <authorList>
            <person name="Saloheimo A."/>
            <person name="Rauta J."/>
            <person name="Stasyk O.V."/>
            <person name="Sibirny A.A."/>
            <person name="Penttila M."/>
            <person name="Ruohonen L."/>
        </authorList>
    </citation>
    <scope>FUNCTION</scope>
    <scope>BIOPHYSICOCHEMICAL PROPERTIES</scope>
    <scope>IDENTIFICATION OF FRAMESHIFT</scope>
</reference>
<evidence type="ECO:0000255" key="1"/>
<evidence type="ECO:0000256" key="2">
    <source>
        <dbReference type="SAM" id="MobiDB-lite"/>
    </source>
</evidence>
<evidence type="ECO:0000269" key="3">
    <source>
    </source>
</evidence>
<evidence type="ECO:0000269" key="4">
    <source>
    </source>
</evidence>
<evidence type="ECO:0000305" key="5"/>
<keyword id="KW-1003">Cell membrane</keyword>
<keyword id="KW-0325">Glycoprotein</keyword>
<keyword id="KW-1017">Isopeptide bond</keyword>
<keyword id="KW-0472">Membrane</keyword>
<keyword id="KW-1185">Reference proteome</keyword>
<keyword id="KW-0677">Repeat</keyword>
<keyword id="KW-0762">Sugar transport</keyword>
<keyword id="KW-0812">Transmembrane</keyword>
<keyword id="KW-1133">Transmembrane helix</keyword>
<keyword id="KW-0813">Transport</keyword>
<keyword id="KW-0832">Ubl conjugation</keyword>
<proteinExistence type="evidence at protein level"/>
<name>HXT4_YEAST</name>
<protein>
    <recommendedName>
        <fullName>Low-affinity glucose transporter HXT4</fullName>
    </recommendedName>
    <alternativeName>
        <fullName>Low-affinity glucose transporter LGT1</fullName>
    </alternativeName>
</protein>